<protein>
    <recommendedName>
        <fullName>Caveolin-1</fullName>
    </recommendedName>
</protein>
<comment type="function">
    <text evidence="3 4">May act as a scaffolding protein within caveolar membranes. Forms a stable heterooligomeric complex with CAV2 that targets to lipid rafts and drives caveolae formation. Mediates the recruitment of CAVIN proteins (CAVIN1/2/3/4) to the caveolae (By similarity). Interacts directly with G-protein alpha subunits and can functionally regulate their activity (By similarity). Involved in the costimulatory signal essential for T-cell receptor (TCR)-mediated T-cell activation. Its binding to DPP4 induces T-cell proliferation and NF-kappa-B activation in a T-cell receptor/CD3-dependent manner (By similarity). Recruits CTNNB1 to caveolar membranes and may regulate CTNNB1-mediated signaling through the Wnt pathway (By similarity). Negatively regulates TGFB1-mediated activation of SMAD2/3 by mediating the internalization of TGFBR1 from membrane rafts leading to its subsequent degradation (By similarity). Binds 20(S)-hydroxycholesterol (20(S)-OHC) (By similarity).</text>
</comment>
<comment type="subunit">
    <text evidence="2 3 4 5">Homooligomer. Interacts with GLIPR2. Interacts with NOSTRIN (By similarity). Interacts with SNAP25 and STX1A (By similarity). Interacts (via the N-terminus) with DPP4; the interaction is direct (By similarity). Interacts with CTNNB1, CDH1 and JUP. Interacts with PACSIN2; this interaction induces membrane tubulation (By similarity). Interacts with SLC7A9 (By similarity). Interacts with BMX and BTK. Interacts with TGFBR1. Interacts with CAVIN3 (via leucine-zipper domain) in a cholesterol-sensitive manner. Interacts with CAVIN1. Interacts with EHD2 in a cholesterol-dependent manner. Forms a ternary complex with UBXN6 and VCP; mediates CAV1 targeting to lysosomes for degradation. Interacts with ABCG1; this interaction regulates ABCG1-mediated cholesterol efflux (By similarity). Interacts with NEU3; this interaction enhances NEU3 sialidase activity within caveola. Interacts (via C-terminus) with SPRY1, SPRY2 (via C-terminus), SPRY3, and SPRY4 (By similarity). Interacts with IGFBP5; this interaction allows trafficking of IGFBP5 from the plasma membrane to the nucleus (By similarity).</text>
</comment>
<comment type="subcellular location">
    <subcellularLocation>
        <location evidence="1">Golgi apparatus membrane</location>
        <topology evidence="1">Peripheral membrane protein</topology>
    </subcellularLocation>
    <subcellularLocation>
        <location evidence="1">Cell membrane</location>
        <topology evidence="1">Peripheral membrane protein</topology>
    </subcellularLocation>
    <subcellularLocation>
        <location evidence="3">Membrane</location>
        <location evidence="3">Caveola</location>
        <topology evidence="1">Peripheral membrane protein</topology>
    </subcellularLocation>
    <subcellularLocation>
        <location evidence="4">Membrane raft</location>
    </subcellularLocation>
    <text evidence="1">Colocalized with DPP4 in membrane rafts. Potential hairpin-like structure in the membrane. Membrane protein of caveolae (By similarity).</text>
</comment>
<comment type="PTM">
    <text evidence="4">Phosphorylated at Tyr-14 by ABL1 in response to oxidative stress.</text>
</comment>
<comment type="PTM">
    <text evidence="4">Ubiquitinated. Undergo monoubiquitination and multi- and/or polyubiquitination. Monoubiquitination of N-terminal lysines promotes integration in a ternary complex with UBXN6 and VCP which promotes oligomeric CAV1 targeting to lysosomes for degradation. Ubiquitinated by ZNRF1; leading to degradation and modulation of the TLR4-mediated immune response.</text>
</comment>
<comment type="similarity">
    <text evidence="7">Belongs to the caveolin family.</text>
</comment>
<dbReference type="EMBL" id="DP000024">
    <property type="protein sequence ID" value="ABC87434.1"/>
    <property type="molecule type" value="Genomic_DNA"/>
</dbReference>
<dbReference type="SMR" id="Q2IBG8"/>
<dbReference type="GO" id="GO:0005901">
    <property type="term" value="C:caveola"/>
    <property type="evidence" value="ECO:0000250"/>
    <property type="project" value="UniProtKB"/>
</dbReference>
<dbReference type="GO" id="GO:0005768">
    <property type="term" value="C:endosome"/>
    <property type="evidence" value="ECO:0000250"/>
    <property type="project" value="UniProtKB"/>
</dbReference>
<dbReference type="GO" id="GO:0005925">
    <property type="term" value="C:focal adhesion"/>
    <property type="evidence" value="ECO:0007669"/>
    <property type="project" value="TreeGrafter"/>
</dbReference>
<dbReference type="GO" id="GO:0000139">
    <property type="term" value="C:Golgi membrane"/>
    <property type="evidence" value="ECO:0007669"/>
    <property type="project" value="UniProtKB-SubCell"/>
</dbReference>
<dbReference type="GO" id="GO:0045121">
    <property type="term" value="C:membrane raft"/>
    <property type="evidence" value="ECO:0000250"/>
    <property type="project" value="UniProtKB"/>
</dbReference>
<dbReference type="GO" id="GO:0048471">
    <property type="term" value="C:perinuclear region of cytoplasm"/>
    <property type="evidence" value="ECO:0007669"/>
    <property type="project" value="TreeGrafter"/>
</dbReference>
<dbReference type="GO" id="GO:0042383">
    <property type="term" value="C:sarcolemma"/>
    <property type="evidence" value="ECO:0007669"/>
    <property type="project" value="TreeGrafter"/>
</dbReference>
<dbReference type="GO" id="GO:0060090">
    <property type="term" value="F:molecular adaptor activity"/>
    <property type="evidence" value="ECO:0007669"/>
    <property type="project" value="TreeGrafter"/>
</dbReference>
<dbReference type="GO" id="GO:0008142">
    <property type="term" value="F:oxysterol binding"/>
    <property type="evidence" value="ECO:0000250"/>
    <property type="project" value="UniProtKB"/>
</dbReference>
<dbReference type="GO" id="GO:0019901">
    <property type="term" value="F:protein kinase binding"/>
    <property type="evidence" value="ECO:0007669"/>
    <property type="project" value="TreeGrafter"/>
</dbReference>
<dbReference type="GO" id="GO:0044325">
    <property type="term" value="F:transmembrane transporter binding"/>
    <property type="evidence" value="ECO:0007669"/>
    <property type="project" value="TreeGrafter"/>
</dbReference>
<dbReference type="GO" id="GO:0070836">
    <property type="term" value="P:caveola assembly"/>
    <property type="evidence" value="ECO:0007669"/>
    <property type="project" value="InterPro"/>
</dbReference>
<dbReference type="GO" id="GO:0030154">
    <property type="term" value="P:cell differentiation"/>
    <property type="evidence" value="ECO:0007669"/>
    <property type="project" value="TreeGrafter"/>
</dbReference>
<dbReference type="GO" id="GO:0001937">
    <property type="term" value="P:negative regulation of endothelial cell proliferation"/>
    <property type="evidence" value="ECO:0007669"/>
    <property type="project" value="TreeGrafter"/>
</dbReference>
<dbReference type="GO" id="GO:0031623">
    <property type="term" value="P:receptor internalization"/>
    <property type="evidence" value="ECO:0000250"/>
    <property type="project" value="UniProtKB"/>
</dbReference>
<dbReference type="GO" id="GO:0051480">
    <property type="term" value="P:regulation of cytosolic calcium ion concentration"/>
    <property type="evidence" value="ECO:0007669"/>
    <property type="project" value="TreeGrafter"/>
</dbReference>
<dbReference type="GO" id="GO:0031295">
    <property type="term" value="P:T cell costimulation"/>
    <property type="evidence" value="ECO:0000250"/>
    <property type="project" value="UniProtKB"/>
</dbReference>
<dbReference type="InterPro" id="IPR001612">
    <property type="entry name" value="Caveolin"/>
</dbReference>
<dbReference type="InterPro" id="IPR018361">
    <property type="entry name" value="Caveolin_CS"/>
</dbReference>
<dbReference type="PANTHER" id="PTHR10844">
    <property type="entry name" value="CAVEOLIN"/>
    <property type="match status" value="1"/>
</dbReference>
<dbReference type="PANTHER" id="PTHR10844:SF18">
    <property type="entry name" value="CAVEOLIN-1"/>
    <property type="match status" value="1"/>
</dbReference>
<dbReference type="Pfam" id="PF01146">
    <property type="entry name" value="Caveolin"/>
    <property type="match status" value="1"/>
</dbReference>
<dbReference type="PROSITE" id="PS01210">
    <property type="entry name" value="CAVEOLIN"/>
    <property type="match status" value="1"/>
</dbReference>
<evidence type="ECO:0000250" key="1"/>
<evidence type="ECO:0000250" key="2">
    <source>
        <dbReference type="UniProtKB" id="P41350"/>
    </source>
</evidence>
<evidence type="ECO:0000250" key="3">
    <source>
        <dbReference type="UniProtKB" id="P49817"/>
    </source>
</evidence>
<evidence type="ECO:0000250" key="4">
    <source>
        <dbReference type="UniProtKB" id="Q03135"/>
    </source>
</evidence>
<evidence type="ECO:0000250" key="5">
    <source>
        <dbReference type="UniProtKB" id="Q2IBA5"/>
    </source>
</evidence>
<evidence type="ECO:0000255" key="6"/>
<evidence type="ECO:0000305" key="7"/>
<sequence>MSGGKYVDSEGHLYTVPIREQGNIYKPNNKAMADEVSEKQQVYDAHTKEIDLVNRDPKHLNDDVVKIDFEDVIAEPEGTHSFDGIWKASFTTFTVTKYWFYRLLSALFGIPMALIWGIYFAILSFLHIWAVVPCIKSFLIEIQCISRVYSIYVHTFCDPLFEAIGKVFSNIRINMQKEI</sequence>
<gene>
    <name type="primary">CAV1</name>
</gene>
<reference key="1">
    <citation type="submission" date="2005-11" db="EMBL/GenBank/DDBJ databases">
        <title>NISC comparative sequencing initiative.</title>
        <authorList>
            <person name="Antonellis A."/>
            <person name="Ayele K."/>
            <person name="Benjamin B."/>
            <person name="Blakesley R.W."/>
            <person name="Boakye A."/>
            <person name="Bouffard G.G."/>
            <person name="Brinkley C."/>
            <person name="Brooks S."/>
            <person name="Chu G."/>
            <person name="Coleman H."/>
            <person name="Engle J."/>
            <person name="Gestole M."/>
            <person name="Greene A."/>
            <person name="Guan X."/>
            <person name="Gupta J."/>
            <person name="Haghighi P."/>
            <person name="Han J."/>
            <person name="Hansen N."/>
            <person name="Ho S.-L."/>
            <person name="Hu P."/>
            <person name="Hunter G."/>
            <person name="Hurle B."/>
            <person name="Idol J.R."/>
            <person name="Kwong P."/>
            <person name="Laric P."/>
            <person name="Larson S."/>
            <person name="Lee-Lin S.-Q."/>
            <person name="Legaspi R."/>
            <person name="Madden M."/>
            <person name="Maduro Q.L."/>
            <person name="Maduro V.B."/>
            <person name="Margulies E.H."/>
            <person name="Masiello C."/>
            <person name="Maskeri B."/>
            <person name="McDowell J."/>
            <person name="Mojidi H.A."/>
            <person name="Mullikin J.C."/>
            <person name="Oestreicher J.S."/>
            <person name="Park M."/>
            <person name="Portnoy M.E."/>
            <person name="Prasad A."/>
            <person name="Puri O."/>
            <person name="Reddix-Dugue N."/>
            <person name="Schandler K."/>
            <person name="Schueler M.G."/>
            <person name="Sison C."/>
            <person name="Stantripop S."/>
            <person name="Stephen E."/>
            <person name="Taye A."/>
            <person name="Thomas J.W."/>
            <person name="Thomas P.J."/>
            <person name="Tsipouri V."/>
            <person name="Ung L."/>
            <person name="Vogt J.L."/>
            <person name="Wetherby K.D."/>
            <person name="Young A."/>
            <person name="Green E.D."/>
        </authorList>
    </citation>
    <scope>NUCLEOTIDE SEQUENCE [LARGE SCALE GENOMIC DNA]</scope>
</reference>
<keyword id="KW-0007">Acetylation</keyword>
<keyword id="KW-1003">Cell membrane</keyword>
<keyword id="KW-0333">Golgi apparatus</keyword>
<keyword id="KW-1017">Isopeptide bond</keyword>
<keyword id="KW-0449">Lipoprotein</keyword>
<keyword id="KW-0472">Membrane</keyword>
<keyword id="KW-0564">Palmitate</keyword>
<keyword id="KW-0597">Phosphoprotein</keyword>
<keyword id="KW-0832">Ubl conjugation</keyword>
<name>CAV1_EULMM</name>
<feature type="initiator methionine" description="Removed" evidence="4">
    <location>
        <position position="1"/>
    </location>
</feature>
<feature type="chain" id="PRO_0000251904" description="Caveolin-1">
    <location>
        <begin position="2"/>
        <end position="179"/>
    </location>
</feature>
<feature type="topological domain" description="Cytoplasmic" evidence="6">
    <location>
        <begin position="2"/>
        <end position="105"/>
    </location>
</feature>
<feature type="intramembrane region" description="Helical" evidence="6">
    <location>
        <begin position="106"/>
        <end position="126"/>
    </location>
</feature>
<feature type="topological domain" description="Cytoplasmic" evidence="6">
    <location>
        <begin position="127"/>
        <end position="179"/>
    </location>
</feature>
<feature type="region of interest" description="Required for homooligomerization" evidence="4">
    <location>
        <begin position="2"/>
        <end position="95"/>
    </location>
</feature>
<feature type="region of interest" description="Interaction with CAVIN3" evidence="4">
    <location>
        <begin position="83"/>
        <end position="95"/>
    </location>
</feature>
<feature type="region of interest" description="Interacts with SPRY1, SPRY2, SPRY3 and SPRY4" evidence="3">
    <location>
        <begin position="132"/>
        <end position="143"/>
    </location>
</feature>
<feature type="region of interest" description="Interacts with SPRY1, SPRY2, and SPRY4" evidence="3">
    <location>
        <begin position="150"/>
        <end position="161"/>
    </location>
</feature>
<feature type="region of interest" description="Interacts with SPRY1, SPRY2, SPRY3 and SPRY4" evidence="3">
    <location>
        <begin position="168"/>
        <end position="179"/>
    </location>
</feature>
<feature type="modified residue" description="N-acetylserine" evidence="4">
    <location>
        <position position="2"/>
    </location>
</feature>
<feature type="modified residue" description="Phosphoserine" evidence="2">
    <location>
        <position position="2"/>
    </location>
</feature>
<feature type="modified residue" description="N6-acetyllysine; alternate" evidence="4">
    <location>
        <position position="5"/>
    </location>
</feature>
<feature type="modified residue" description="Phosphotyrosine" evidence="4">
    <location>
        <position position="6"/>
    </location>
</feature>
<feature type="modified residue" description="Phosphoserine" evidence="3">
    <location>
        <position position="9"/>
    </location>
</feature>
<feature type="modified residue" description="Phosphotyrosine; by ABL1" evidence="3">
    <location>
        <position position="14"/>
    </location>
</feature>
<feature type="modified residue" description="Phosphotyrosine" evidence="4">
    <location>
        <position position="25"/>
    </location>
</feature>
<feature type="modified residue" description="Phosphoserine" evidence="4">
    <location>
        <position position="37"/>
    </location>
</feature>
<feature type="lipid moiety-binding region" description="S-palmitoyl cysteine" evidence="1">
    <location>
        <position position="134"/>
    </location>
</feature>
<feature type="lipid moiety-binding region" description="S-palmitoyl cysteine" evidence="1">
    <location>
        <position position="144"/>
    </location>
</feature>
<feature type="lipid moiety-binding region" description="S-palmitoyl cysteine" evidence="1">
    <location>
        <position position="157"/>
    </location>
</feature>
<feature type="cross-link" description="Glycyl lysine isopeptide (Lys-Gly) (interchain with G-Cter in ubiquitin); alternate" evidence="4">
    <location>
        <position position="5"/>
    </location>
</feature>
<feature type="cross-link" description="Glycyl lysine isopeptide (Lys-Gly) (interchain with G-Cter in ubiquitin)" evidence="4">
    <location>
        <position position="26"/>
    </location>
</feature>
<feature type="cross-link" description="Glycyl lysine isopeptide (Lys-Gly) (interchain with G-Cter in ubiquitin)" evidence="4">
    <location>
        <position position="30"/>
    </location>
</feature>
<feature type="cross-link" description="Glycyl lysine isopeptide (Lys-Gly) (interchain with G-Cter in ubiquitin)" evidence="4">
    <location>
        <position position="39"/>
    </location>
</feature>
<feature type="cross-link" description="Glycyl lysine isopeptide (Lys-Gly) (interchain with G-Cter in ubiquitin)" evidence="4">
    <location>
        <position position="48"/>
    </location>
</feature>
<feature type="cross-link" description="Glycyl lysine isopeptide (Lys-Gly) (interchain with G-Cter in ubiquitin)" evidence="4">
    <location>
        <position position="58"/>
    </location>
</feature>
<organism>
    <name type="scientific">Eulemur macaco macaco</name>
    <name type="common">Black lemur</name>
    <dbReference type="NCBI Taxonomy" id="30603"/>
    <lineage>
        <taxon>Eukaryota</taxon>
        <taxon>Metazoa</taxon>
        <taxon>Chordata</taxon>
        <taxon>Craniata</taxon>
        <taxon>Vertebrata</taxon>
        <taxon>Euteleostomi</taxon>
        <taxon>Mammalia</taxon>
        <taxon>Eutheria</taxon>
        <taxon>Euarchontoglires</taxon>
        <taxon>Primates</taxon>
        <taxon>Strepsirrhini</taxon>
        <taxon>Lemuriformes</taxon>
        <taxon>Lemuridae</taxon>
        <taxon>Eulemur</taxon>
    </lineage>
</organism>
<proteinExistence type="inferred from homology"/>
<accession>Q2IBG8</accession>